<accession>Q7UNC2</accession>
<dbReference type="EC" id="4.2.1.19" evidence="1"/>
<dbReference type="EMBL" id="BX294146">
    <property type="protein sequence ID" value="CAD75497.1"/>
    <property type="molecule type" value="Genomic_DNA"/>
</dbReference>
<dbReference type="RefSeq" id="NP_867950.1">
    <property type="nucleotide sequence ID" value="NC_005027.1"/>
</dbReference>
<dbReference type="RefSeq" id="WP_007325657.1">
    <property type="nucleotide sequence ID" value="NC_005027.1"/>
</dbReference>
<dbReference type="SMR" id="Q7UNC2"/>
<dbReference type="FunCoup" id="Q7UNC2">
    <property type="interactions" value="355"/>
</dbReference>
<dbReference type="STRING" id="243090.RB7662"/>
<dbReference type="EnsemblBacteria" id="CAD75497">
    <property type="protein sequence ID" value="CAD75497"/>
    <property type="gene ID" value="RB7662"/>
</dbReference>
<dbReference type="KEGG" id="rba:RB7662"/>
<dbReference type="PATRIC" id="fig|243090.15.peg.3702"/>
<dbReference type="eggNOG" id="COG0131">
    <property type="taxonomic scope" value="Bacteria"/>
</dbReference>
<dbReference type="HOGENOM" id="CLU_044308_3_0_0"/>
<dbReference type="InParanoid" id="Q7UNC2"/>
<dbReference type="OrthoDB" id="9790411at2"/>
<dbReference type="UniPathway" id="UPA00031">
    <property type="reaction ID" value="UER00011"/>
</dbReference>
<dbReference type="Proteomes" id="UP000001025">
    <property type="component" value="Chromosome"/>
</dbReference>
<dbReference type="GO" id="GO:0005737">
    <property type="term" value="C:cytoplasm"/>
    <property type="evidence" value="ECO:0007669"/>
    <property type="project" value="UniProtKB-SubCell"/>
</dbReference>
<dbReference type="GO" id="GO:0004424">
    <property type="term" value="F:imidazoleglycerol-phosphate dehydratase activity"/>
    <property type="evidence" value="ECO:0000318"/>
    <property type="project" value="GO_Central"/>
</dbReference>
<dbReference type="GO" id="GO:0000105">
    <property type="term" value="P:L-histidine biosynthetic process"/>
    <property type="evidence" value="ECO:0000318"/>
    <property type="project" value="GO_Central"/>
</dbReference>
<dbReference type="CDD" id="cd07914">
    <property type="entry name" value="IGPD"/>
    <property type="match status" value="1"/>
</dbReference>
<dbReference type="FunFam" id="3.30.230.40:FF:000001">
    <property type="entry name" value="Imidazoleglycerol-phosphate dehydratase HisB"/>
    <property type="match status" value="1"/>
</dbReference>
<dbReference type="FunFam" id="3.30.230.40:FF:000003">
    <property type="entry name" value="Imidazoleglycerol-phosphate dehydratase HisB"/>
    <property type="match status" value="1"/>
</dbReference>
<dbReference type="Gene3D" id="3.30.230.40">
    <property type="entry name" value="Imidazole glycerol phosphate dehydratase, domain 1"/>
    <property type="match status" value="2"/>
</dbReference>
<dbReference type="HAMAP" id="MF_00076">
    <property type="entry name" value="HisB"/>
    <property type="match status" value="1"/>
</dbReference>
<dbReference type="InterPro" id="IPR038494">
    <property type="entry name" value="IGPD_sf"/>
</dbReference>
<dbReference type="InterPro" id="IPR000807">
    <property type="entry name" value="ImidazoleglycerolP_deHydtase"/>
</dbReference>
<dbReference type="InterPro" id="IPR020565">
    <property type="entry name" value="ImidazoleglycerP_deHydtase_CS"/>
</dbReference>
<dbReference type="InterPro" id="IPR020568">
    <property type="entry name" value="Ribosomal_Su5_D2-typ_SF"/>
</dbReference>
<dbReference type="NCBIfam" id="NF002111">
    <property type="entry name" value="PRK00951.2-1"/>
    <property type="match status" value="1"/>
</dbReference>
<dbReference type="NCBIfam" id="NF002114">
    <property type="entry name" value="PRK00951.2-4"/>
    <property type="match status" value="1"/>
</dbReference>
<dbReference type="PANTHER" id="PTHR23133:SF2">
    <property type="entry name" value="IMIDAZOLEGLYCEROL-PHOSPHATE DEHYDRATASE"/>
    <property type="match status" value="1"/>
</dbReference>
<dbReference type="PANTHER" id="PTHR23133">
    <property type="entry name" value="IMIDAZOLEGLYCEROL-PHOSPHATE DEHYDRATASE HIS7"/>
    <property type="match status" value="1"/>
</dbReference>
<dbReference type="Pfam" id="PF00475">
    <property type="entry name" value="IGPD"/>
    <property type="match status" value="1"/>
</dbReference>
<dbReference type="SUPFAM" id="SSF54211">
    <property type="entry name" value="Ribosomal protein S5 domain 2-like"/>
    <property type="match status" value="2"/>
</dbReference>
<dbReference type="PROSITE" id="PS00954">
    <property type="entry name" value="IGP_DEHYDRATASE_1"/>
    <property type="match status" value="1"/>
</dbReference>
<dbReference type="PROSITE" id="PS00955">
    <property type="entry name" value="IGP_DEHYDRATASE_2"/>
    <property type="match status" value="1"/>
</dbReference>
<name>HIS7_RHOBA</name>
<comment type="catalytic activity">
    <reaction evidence="1">
        <text>D-erythro-1-(imidazol-4-yl)glycerol 3-phosphate = 3-(imidazol-4-yl)-2-oxopropyl phosphate + H2O</text>
        <dbReference type="Rhea" id="RHEA:11040"/>
        <dbReference type="ChEBI" id="CHEBI:15377"/>
        <dbReference type="ChEBI" id="CHEBI:57766"/>
        <dbReference type="ChEBI" id="CHEBI:58278"/>
        <dbReference type="EC" id="4.2.1.19"/>
    </reaction>
</comment>
<comment type="pathway">
    <text evidence="1">Amino-acid biosynthesis; L-histidine biosynthesis; L-histidine from 5-phospho-alpha-D-ribose 1-diphosphate: step 6/9.</text>
</comment>
<comment type="subcellular location">
    <subcellularLocation>
        <location evidence="1">Cytoplasm</location>
    </subcellularLocation>
</comment>
<comment type="similarity">
    <text evidence="1">Belongs to the imidazoleglycerol-phosphate dehydratase family.</text>
</comment>
<organism>
    <name type="scientific">Rhodopirellula baltica (strain DSM 10527 / NCIMB 13988 / SH1)</name>
    <dbReference type="NCBI Taxonomy" id="243090"/>
    <lineage>
        <taxon>Bacteria</taxon>
        <taxon>Pseudomonadati</taxon>
        <taxon>Planctomycetota</taxon>
        <taxon>Planctomycetia</taxon>
        <taxon>Pirellulales</taxon>
        <taxon>Pirellulaceae</taxon>
        <taxon>Rhodopirellula</taxon>
    </lineage>
</organism>
<evidence type="ECO:0000255" key="1">
    <source>
        <dbReference type="HAMAP-Rule" id="MF_00076"/>
    </source>
</evidence>
<protein>
    <recommendedName>
        <fullName evidence="1">Imidazoleglycerol-phosphate dehydratase</fullName>
        <shortName evidence="1">IGPD</shortName>
        <ecNumber evidence="1">4.2.1.19</ecNumber>
    </recommendedName>
</protein>
<reference key="1">
    <citation type="journal article" date="2003" name="Proc. Natl. Acad. Sci. U.S.A.">
        <title>Complete genome sequence of the marine planctomycete Pirellula sp. strain 1.</title>
        <authorList>
            <person name="Gloeckner F.O."/>
            <person name="Kube M."/>
            <person name="Bauer M."/>
            <person name="Teeling H."/>
            <person name="Lombardot T."/>
            <person name="Ludwig W."/>
            <person name="Gade D."/>
            <person name="Beck A."/>
            <person name="Borzym K."/>
            <person name="Heitmann K."/>
            <person name="Rabus R."/>
            <person name="Schlesner H."/>
            <person name="Amann R."/>
            <person name="Reinhardt R."/>
        </authorList>
    </citation>
    <scope>NUCLEOTIDE SEQUENCE [LARGE SCALE GENOMIC DNA]</scope>
    <source>
        <strain>DSM 10527 / NCIMB 13988 / SH1</strain>
    </source>
</reference>
<keyword id="KW-0028">Amino-acid biosynthesis</keyword>
<keyword id="KW-0963">Cytoplasm</keyword>
<keyword id="KW-0368">Histidine biosynthesis</keyword>
<keyword id="KW-0456">Lyase</keyword>
<keyword id="KW-1185">Reference proteome</keyword>
<gene>
    <name evidence="1" type="primary">hisB</name>
    <name type="synonym">hisBD</name>
    <name type="ordered locus">RB7662</name>
</gene>
<proteinExistence type="inferred from homology"/>
<feature type="chain" id="PRO_0000158162" description="Imidazoleglycerol-phosphate dehydratase">
    <location>
        <begin position="1"/>
        <end position="202"/>
    </location>
</feature>
<sequence length="202" mass="21767">MTSSNSNSSREVSLERKTGETDIKLSVNLDGSGAGKRDSGIGFLDHMLDLLAKHALIDLTVEAKGDLHVDDHHTAEDIGIALGTAVDRALGDRAGVRRYGHFTLPMDECLVTSAVDMGGRYAFEYNAPIAASKIGTFDSELVEHFWQSFAVNAKCNLHVLLHHGSNGHHISECVFKATARAIRMAVESDPRSDAIPSTKGVL</sequence>